<dbReference type="InParanoid" id="P85812"/>
<dbReference type="Proteomes" id="UP000015103">
    <property type="component" value="Unassembled WGS sequence"/>
</dbReference>
<dbReference type="GO" id="GO:0005576">
    <property type="term" value="C:extracellular region"/>
    <property type="evidence" value="ECO:0007669"/>
    <property type="project" value="UniProtKB-SubCell"/>
</dbReference>
<dbReference type="GO" id="GO:0007218">
    <property type="term" value="P:neuropeptide signaling pathway"/>
    <property type="evidence" value="ECO:0007669"/>
    <property type="project" value="UniProtKB-KW"/>
</dbReference>
<feature type="peptide" id="PRO_0000365746" description="Corazonin" evidence="3">
    <location>
        <begin position="1"/>
        <end position="11"/>
    </location>
</feature>
<feature type="modified residue" description="Pyrrolidone carboxylic acid" evidence="3">
    <location>
        <position position="1"/>
    </location>
</feature>
<feature type="modified residue" description="Asparagine amide" evidence="3">
    <location>
        <position position="11"/>
    </location>
</feature>
<accession>P85812</accession>
<comment type="function">
    <text evidence="1">Cardioactive peptide. Corazonin is probably involved in the physiological regulation of the heart beat (By similarity).</text>
</comment>
<comment type="subcellular location">
    <subcellularLocation>
        <location evidence="1">Secreted</location>
    </subcellularLocation>
</comment>
<comment type="mass spectrometry"/>
<comment type="similarity">
    <text evidence="2">Belongs to the corazonin family.</text>
</comment>
<proteinExistence type="evidence at protein level"/>
<organism>
    <name type="scientific">Rhodnius prolixus</name>
    <name type="common">Triatomid bug</name>
    <dbReference type="NCBI Taxonomy" id="13249"/>
    <lineage>
        <taxon>Eukaryota</taxon>
        <taxon>Metazoa</taxon>
        <taxon>Ecdysozoa</taxon>
        <taxon>Arthropoda</taxon>
        <taxon>Hexapoda</taxon>
        <taxon>Insecta</taxon>
        <taxon>Pterygota</taxon>
        <taxon>Neoptera</taxon>
        <taxon>Paraneoptera</taxon>
        <taxon>Hemiptera</taxon>
        <taxon>Heteroptera</taxon>
        <taxon>Panheteroptera</taxon>
        <taxon>Cimicomorpha</taxon>
        <taxon>Reduviidae</taxon>
        <taxon>Triatominae</taxon>
        <taxon>Rhodnius</taxon>
    </lineage>
</organism>
<name>CORZ_RHOPR</name>
<reference evidence="5" key="1">
    <citation type="journal article" date="2009" name="Proteomics">
        <title>The neuropeptidome of Rhodnius prolixus brain.</title>
        <authorList>
            <person name="Ons S."/>
            <person name="Richter F."/>
            <person name="Urlaub H."/>
            <person name="Pomar R.R."/>
        </authorList>
    </citation>
    <scope>PROTEIN SEQUENCE</scope>
    <scope>MASS SPECTROMETRY</scope>
    <scope>PYROGLUTAMATE FORMATION AT GLN-1</scope>
    <scope>AMIDATION AT ASN-11</scope>
    <source>
        <tissue evidence="3">Brain</tissue>
    </source>
</reference>
<sequence>QTFQYSRGWTN</sequence>
<protein>
    <recommendedName>
        <fullName evidence="4">Corazonin</fullName>
        <shortName evidence="4">Rhopr-Crz</shortName>
    </recommendedName>
</protein>
<evidence type="ECO:0000250" key="1">
    <source>
        <dbReference type="UniProtKB" id="P11496"/>
    </source>
</evidence>
<evidence type="ECO:0000255" key="2"/>
<evidence type="ECO:0000269" key="3">
    <source>
    </source>
</evidence>
<evidence type="ECO:0000303" key="4">
    <source>
    </source>
</evidence>
<evidence type="ECO:0000305" key="5"/>
<keyword id="KW-0027">Amidation</keyword>
<keyword id="KW-0903">Direct protein sequencing</keyword>
<keyword id="KW-0527">Neuropeptide</keyword>
<keyword id="KW-0873">Pyrrolidone carboxylic acid</keyword>
<keyword id="KW-1185">Reference proteome</keyword>
<keyword id="KW-0964">Secreted</keyword>